<feature type="chain" id="PRO_1000139950" description="L-fucose isomerase">
    <location>
        <begin position="1"/>
        <end position="591"/>
    </location>
</feature>
<feature type="active site" description="Proton acceptor" evidence="1">
    <location>
        <position position="337"/>
    </location>
</feature>
<feature type="active site" description="Proton acceptor" evidence="1">
    <location>
        <position position="361"/>
    </location>
</feature>
<feature type="binding site" evidence="1">
    <location>
        <position position="337"/>
    </location>
    <ligand>
        <name>Mn(2+)</name>
        <dbReference type="ChEBI" id="CHEBI:29035"/>
    </ligand>
</feature>
<feature type="binding site" evidence="1">
    <location>
        <position position="361"/>
    </location>
    <ligand>
        <name>Mn(2+)</name>
        <dbReference type="ChEBI" id="CHEBI:29035"/>
    </ligand>
</feature>
<feature type="binding site" evidence="1">
    <location>
        <position position="528"/>
    </location>
    <ligand>
        <name>Mn(2+)</name>
        <dbReference type="ChEBI" id="CHEBI:29035"/>
    </ligand>
</feature>
<comment type="function">
    <text evidence="1">Converts the aldose L-fucose into the corresponding ketose L-fuculose.</text>
</comment>
<comment type="catalytic activity">
    <reaction evidence="1">
        <text>L-fucose = L-fuculose</text>
        <dbReference type="Rhea" id="RHEA:17233"/>
        <dbReference type="ChEBI" id="CHEBI:2181"/>
        <dbReference type="ChEBI" id="CHEBI:17617"/>
        <dbReference type="EC" id="5.3.1.25"/>
    </reaction>
</comment>
<comment type="cofactor">
    <cofactor evidence="1">
        <name>Mn(2+)</name>
        <dbReference type="ChEBI" id="CHEBI:29035"/>
    </cofactor>
</comment>
<comment type="pathway">
    <text evidence="1">Carbohydrate degradation; L-fucose degradation; L-lactaldehyde and glycerone phosphate from L-fucose: step 1/3.</text>
</comment>
<comment type="subunit">
    <text evidence="1">Homohexamer.</text>
</comment>
<comment type="subcellular location">
    <subcellularLocation>
        <location evidence="1">Cytoplasm</location>
    </subcellularLocation>
</comment>
<comment type="similarity">
    <text evidence="1">Belongs to the L-fucose isomerase family.</text>
</comment>
<name>FUCI_ECO7I</name>
<dbReference type="EC" id="5.3.1.25" evidence="1"/>
<dbReference type="EMBL" id="CU928164">
    <property type="protein sequence ID" value="CAR19343.1"/>
    <property type="molecule type" value="Genomic_DNA"/>
</dbReference>
<dbReference type="RefSeq" id="WP_000724153.1">
    <property type="nucleotide sequence ID" value="NC_011750.1"/>
</dbReference>
<dbReference type="RefSeq" id="YP_002409148.1">
    <property type="nucleotide sequence ID" value="NC_011750.1"/>
</dbReference>
<dbReference type="SMR" id="B7NVV0"/>
<dbReference type="STRING" id="585057.ECIAI39_3224"/>
<dbReference type="GeneID" id="75172886"/>
<dbReference type="KEGG" id="ect:ECIAI39_3224"/>
<dbReference type="PATRIC" id="fig|585057.6.peg.3350"/>
<dbReference type="HOGENOM" id="CLU_033326_1_0_6"/>
<dbReference type="UniPathway" id="UPA00563">
    <property type="reaction ID" value="UER00624"/>
</dbReference>
<dbReference type="Proteomes" id="UP000000749">
    <property type="component" value="Chromosome"/>
</dbReference>
<dbReference type="GO" id="GO:0005737">
    <property type="term" value="C:cytoplasm"/>
    <property type="evidence" value="ECO:0007669"/>
    <property type="project" value="UniProtKB-SubCell"/>
</dbReference>
<dbReference type="GO" id="GO:0008790">
    <property type="term" value="F:arabinose isomerase activity"/>
    <property type="evidence" value="ECO:0007669"/>
    <property type="project" value="TreeGrafter"/>
</dbReference>
<dbReference type="GO" id="GO:0008736">
    <property type="term" value="F:L-fucose isomerase activity"/>
    <property type="evidence" value="ECO:0007669"/>
    <property type="project" value="UniProtKB-UniRule"/>
</dbReference>
<dbReference type="GO" id="GO:0030145">
    <property type="term" value="F:manganese ion binding"/>
    <property type="evidence" value="ECO:0007669"/>
    <property type="project" value="UniProtKB-UniRule"/>
</dbReference>
<dbReference type="GO" id="GO:0019571">
    <property type="term" value="P:D-arabinose catabolic process"/>
    <property type="evidence" value="ECO:0007669"/>
    <property type="project" value="TreeGrafter"/>
</dbReference>
<dbReference type="GO" id="GO:0042355">
    <property type="term" value="P:L-fucose catabolic process"/>
    <property type="evidence" value="ECO:0007669"/>
    <property type="project" value="UniProtKB-UniRule"/>
</dbReference>
<dbReference type="CDD" id="cd03556">
    <property type="entry name" value="L-fucose_isomerase"/>
    <property type="match status" value="1"/>
</dbReference>
<dbReference type="FunFam" id="3.20.14.10:FF:000001">
    <property type="entry name" value="L-fucose isomerase"/>
    <property type="match status" value="1"/>
</dbReference>
<dbReference type="FunFam" id="3.40.275.10:FF:000001">
    <property type="entry name" value="L-fucose isomerase"/>
    <property type="match status" value="1"/>
</dbReference>
<dbReference type="FunFam" id="3.40.50.1070:FF:000001">
    <property type="entry name" value="L-fucose isomerase"/>
    <property type="match status" value="1"/>
</dbReference>
<dbReference type="Gene3D" id="3.40.50.1070">
    <property type="match status" value="1"/>
</dbReference>
<dbReference type="Gene3D" id="3.40.275.10">
    <property type="entry name" value="L-fucose Isomerase, Chain A, domain 2"/>
    <property type="match status" value="1"/>
</dbReference>
<dbReference type="Gene3D" id="3.20.14.10">
    <property type="entry name" value="L-fucose/L-arabinose isomerase, C-terminal"/>
    <property type="match status" value="1"/>
</dbReference>
<dbReference type="HAMAP" id="MF_01254">
    <property type="entry name" value="Fucose_iso"/>
    <property type="match status" value="1"/>
</dbReference>
<dbReference type="InterPro" id="IPR004216">
    <property type="entry name" value="Fuc/Ara_isomerase_C"/>
</dbReference>
<dbReference type="InterPro" id="IPR038393">
    <property type="entry name" value="Fuc_iso_dom3_sf"/>
</dbReference>
<dbReference type="InterPro" id="IPR015888">
    <property type="entry name" value="Fuc_isomerase_C"/>
</dbReference>
<dbReference type="InterPro" id="IPR038391">
    <property type="entry name" value="Fucose_iso_dom1_sf"/>
</dbReference>
<dbReference type="InterPro" id="IPR012888">
    <property type="entry name" value="Fucose_iso_N1"/>
</dbReference>
<dbReference type="InterPro" id="IPR005763">
    <property type="entry name" value="Fucose_isomerase"/>
</dbReference>
<dbReference type="InterPro" id="IPR038392">
    <property type="entry name" value="Fucose_isomerase_dom2_sf"/>
</dbReference>
<dbReference type="InterPro" id="IPR009015">
    <property type="entry name" value="Fucose_isomerase_N/cen_sf"/>
</dbReference>
<dbReference type="InterPro" id="IPR012889">
    <property type="entry name" value="Fucose_isomerase_N2"/>
</dbReference>
<dbReference type="NCBIfam" id="TIGR01089">
    <property type="entry name" value="fucI"/>
    <property type="match status" value="1"/>
</dbReference>
<dbReference type="NCBIfam" id="NF008220">
    <property type="entry name" value="PRK10991.1"/>
    <property type="match status" value="1"/>
</dbReference>
<dbReference type="PANTHER" id="PTHR37840">
    <property type="entry name" value="L-FUCOSE ISOMERASE"/>
    <property type="match status" value="1"/>
</dbReference>
<dbReference type="PANTHER" id="PTHR37840:SF1">
    <property type="entry name" value="L-FUCOSE ISOMERASE"/>
    <property type="match status" value="1"/>
</dbReference>
<dbReference type="Pfam" id="PF02952">
    <property type="entry name" value="Fucose_iso_C"/>
    <property type="match status" value="1"/>
</dbReference>
<dbReference type="Pfam" id="PF07881">
    <property type="entry name" value="Fucose_iso_N1"/>
    <property type="match status" value="1"/>
</dbReference>
<dbReference type="Pfam" id="PF07882">
    <property type="entry name" value="Fucose_iso_N2"/>
    <property type="match status" value="1"/>
</dbReference>
<dbReference type="SUPFAM" id="SSF50443">
    <property type="entry name" value="FucI/AraA C-terminal domain-like"/>
    <property type="match status" value="1"/>
</dbReference>
<dbReference type="SUPFAM" id="SSF53743">
    <property type="entry name" value="FucI/AraA N-terminal and middle domains"/>
    <property type="match status" value="1"/>
</dbReference>
<accession>B7NVV0</accession>
<sequence>MKKISLPKIGIRPVIDGRRMGVRESLEEQTMNMAKATAALLTEKLRHACGAAVECVISDTCIAGMAEAAACEEKFSSQNVGLTITVTPCWCYGSETIDMDPTRPKAIWGFNGTERPGAVYLAAALAAHSQKGIPAFSIYGHDVQDADDTSIPADVEEKLLRFARAGLAVASMKGKSYLSLGGVSMGIAGSIVDHNFFESWLGMKVQAVDMTELRRRIDQKIYDEAELEMALAWADKNFRYGEDENNKQYQRNAEQSRAVLRESLLMAMCIRDMMQGNSKLADIGRVEESLGYNAIAAGFQGQRHWTDQYPNGDTAEAILNSSFDWNGVREPFVVATENDSLNGVAMLMGHQLTGTAQVFADVRTYWSPEAIERVTGHKLDGLAEHGIIHLINSGSAALDGSCKQRDSEGNPTMKPHWEISQQEADACLAATEWCPAIHEYFRGGGYSSRFLTEGGVPFTMTRVNIIKGLGPVLQIAEGWSVELPKDVHDILNKRTNSTWPTTWFAPRLTGKGPFTDVYSVMANWGANHGVLTIGHVGADFITLASMLRIPVCMHNVEETKVYRPSAWAAHGMDIEGQDYRACQNYGPLYKR</sequence>
<gene>
    <name evidence="1" type="primary">fucI</name>
    <name type="ordered locus">ECIAI39_3224</name>
</gene>
<organism>
    <name type="scientific">Escherichia coli O7:K1 (strain IAI39 / ExPEC)</name>
    <dbReference type="NCBI Taxonomy" id="585057"/>
    <lineage>
        <taxon>Bacteria</taxon>
        <taxon>Pseudomonadati</taxon>
        <taxon>Pseudomonadota</taxon>
        <taxon>Gammaproteobacteria</taxon>
        <taxon>Enterobacterales</taxon>
        <taxon>Enterobacteriaceae</taxon>
        <taxon>Escherichia</taxon>
    </lineage>
</organism>
<evidence type="ECO:0000255" key="1">
    <source>
        <dbReference type="HAMAP-Rule" id="MF_01254"/>
    </source>
</evidence>
<proteinExistence type="inferred from homology"/>
<keyword id="KW-0119">Carbohydrate metabolism</keyword>
<keyword id="KW-0963">Cytoplasm</keyword>
<keyword id="KW-0294">Fucose metabolism</keyword>
<keyword id="KW-0413">Isomerase</keyword>
<keyword id="KW-0464">Manganese</keyword>
<keyword id="KW-0479">Metal-binding</keyword>
<reference key="1">
    <citation type="journal article" date="2009" name="PLoS Genet.">
        <title>Organised genome dynamics in the Escherichia coli species results in highly diverse adaptive paths.</title>
        <authorList>
            <person name="Touchon M."/>
            <person name="Hoede C."/>
            <person name="Tenaillon O."/>
            <person name="Barbe V."/>
            <person name="Baeriswyl S."/>
            <person name="Bidet P."/>
            <person name="Bingen E."/>
            <person name="Bonacorsi S."/>
            <person name="Bouchier C."/>
            <person name="Bouvet O."/>
            <person name="Calteau A."/>
            <person name="Chiapello H."/>
            <person name="Clermont O."/>
            <person name="Cruveiller S."/>
            <person name="Danchin A."/>
            <person name="Diard M."/>
            <person name="Dossat C."/>
            <person name="Karoui M.E."/>
            <person name="Frapy E."/>
            <person name="Garry L."/>
            <person name="Ghigo J.M."/>
            <person name="Gilles A.M."/>
            <person name="Johnson J."/>
            <person name="Le Bouguenec C."/>
            <person name="Lescat M."/>
            <person name="Mangenot S."/>
            <person name="Martinez-Jehanne V."/>
            <person name="Matic I."/>
            <person name="Nassif X."/>
            <person name="Oztas S."/>
            <person name="Petit M.A."/>
            <person name="Pichon C."/>
            <person name="Rouy Z."/>
            <person name="Ruf C.S."/>
            <person name="Schneider D."/>
            <person name="Tourret J."/>
            <person name="Vacherie B."/>
            <person name="Vallenet D."/>
            <person name="Medigue C."/>
            <person name="Rocha E.P.C."/>
            <person name="Denamur E."/>
        </authorList>
    </citation>
    <scope>NUCLEOTIDE SEQUENCE [LARGE SCALE GENOMIC DNA]</scope>
    <source>
        <strain>IAI39 / ExPEC</strain>
    </source>
</reference>
<protein>
    <recommendedName>
        <fullName evidence="1">L-fucose isomerase</fullName>
        <ecNumber evidence="1">5.3.1.25</ecNumber>
    </recommendedName>
    <alternativeName>
        <fullName evidence="1">6-deoxy-L-galactose isomerase</fullName>
    </alternativeName>
    <alternativeName>
        <fullName>FucIase</fullName>
    </alternativeName>
</protein>